<feature type="chain" id="PRO_0000060277" description="Probable ABC transporter permease protein YurN">
    <location>
        <begin position="1"/>
        <end position="292"/>
    </location>
</feature>
<feature type="transmembrane region" description="Helical" evidence="1">
    <location>
        <begin position="7"/>
        <end position="27"/>
    </location>
</feature>
<feature type="transmembrane region" description="Helical" evidence="1">
    <location>
        <begin position="70"/>
        <end position="90"/>
    </location>
</feature>
<feature type="transmembrane region" description="Helical" evidence="1">
    <location>
        <begin position="106"/>
        <end position="126"/>
    </location>
</feature>
<feature type="transmembrane region" description="Helical" evidence="1">
    <location>
        <begin position="160"/>
        <end position="180"/>
    </location>
</feature>
<feature type="transmembrane region" description="Helical" evidence="1">
    <location>
        <begin position="215"/>
        <end position="235"/>
    </location>
</feature>
<feature type="transmembrane region" description="Helical" evidence="1">
    <location>
        <begin position="260"/>
        <end position="280"/>
    </location>
</feature>
<feature type="domain" description="ABC transmembrane type-1" evidence="1">
    <location>
        <begin position="66"/>
        <end position="282"/>
    </location>
</feature>
<protein>
    <recommendedName>
        <fullName>Probable ABC transporter permease protein YurN</fullName>
    </recommendedName>
</protein>
<gene>
    <name type="primary">yurN</name>
    <name type="ordered locus">BSU32590</name>
</gene>
<accession>O32155</accession>
<comment type="function">
    <text>Probably part of the binding-protein-dependent transport system YurMNO. Probably responsible for the translocation of the substrate across the membrane.</text>
</comment>
<comment type="subcellular location">
    <subcellularLocation>
        <location evidence="2">Cell membrane</location>
        <topology evidence="1">Multi-pass membrane protein</topology>
    </subcellularLocation>
</comment>
<comment type="similarity">
    <text evidence="2">Belongs to the binding-protein-dependent transport system permease family. MalFG subfamily.</text>
</comment>
<organism>
    <name type="scientific">Bacillus subtilis (strain 168)</name>
    <dbReference type="NCBI Taxonomy" id="224308"/>
    <lineage>
        <taxon>Bacteria</taxon>
        <taxon>Bacillati</taxon>
        <taxon>Bacillota</taxon>
        <taxon>Bacilli</taxon>
        <taxon>Bacillales</taxon>
        <taxon>Bacillaceae</taxon>
        <taxon>Bacillus</taxon>
    </lineage>
</organism>
<proteinExistence type="inferred from homology"/>
<dbReference type="EMBL" id="AL009126">
    <property type="protein sequence ID" value="CAB15249.1"/>
    <property type="molecule type" value="Genomic_DNA"/>
</dbReference>
<dbReference type="PIR" id="E70018">
    <property type="entry name" value="E70018"/>
</dbReference>
<dbReference type="RefSeq" id="WP_003243523.1">
    <property type="nucleotide sequence ID" value="NZ_OZ025638.1"/>
</dbReference>
<dbReference type="SMR" id="O32155"/>
<dbReference type="FunCoup" id="O32155">
    <property type="interactions" value="148"/>
</dbReference>
<dbReference type="STRING" id="224308.BSU32590"/>
<dbReference type="PaxDb" id="224308-BSU32590"/>
<dbReference type="EnsemblBacteria" id="CAB15249">
    <property type="protein sequence ID" value="CAB15249"/>
    <property type="gene ID" value="BSU_32590"/>
</dbReference>
<dbReference type="GeneID" id="936689"/>
<dbReference type="KEGG" id="bsu:BSU32590"/>
<dbReference type="PATRIC" id="fig|224308.179.peg.3529"/>
<dbReference type="eggNOG" id="COG1175">
    <property type="taxonomic scope" value="Bacteria"/>
</dbReference>
<dbReference type="InParanoid" id="O32155"/>
<dbReference type="OrthoDB" id="9809173at2"/>
<dbReference type="PhylomeDB" id="O32155"/>
<dbReference type="BioCyc" id="BSUB:BSU32590-MONOMER"/>
<dbReference type="Proteomes" id="UP000001570">
    <property type="component" value="Chromosome"/>
</dbReference>
<dbReference type="GO" id="GO:0005886">
    <property type="term" value="C:plasma membrane"/>
    <property type="evidence" value="ECO:0007669"/>
    <property type="project" value="UniProtKB-SubCell"/>
</dbReference>
<dbReference type="GO" id="GO:0055085">
    <property type="term" value="P:transmembrane transport"/>
    <property type="evidence" value="ECO:0007669"/>
    <property type="project" value="InterPro"/>
</dbReference>
<dbReference type="CDD" id="cd06261">
    <property type="entry name" value="TM_PBP2"/>
    <property type="match status" value="1"/>
</dbReference>
<dbReference type="Gene3D" id="1.10.3720.10">
    <property type="entry name" value="MetI-like"/>
    <property type="match status" value="1"/>
</dbReference>
<dbReference type="InterPro" id="IPR051393">
    <property type="entry name" value="ABC_transporter_permease"/>
</dbReference>
<dbReference type="InterPro" id="IPR000515">
    <property type="entry name" value="MetI-like"/>
</dbReference>
<dbReference type="InterPro" id="IPR035906">
    <property type="entry name" value="MetI-like_sf"/>
</dbReference>
<dbReference type="PANTHER" id="PTHR30193">
    <property type="entry name" value="ABC TRANSPORTER PERMEASE PROTEIN"/>
    <property type="match status" value="1"/>
</dbReference>
<dbReference type="PANTHER" id="PTHR30193:SF37">
    <property type="entry name" value="INNER MEMBRANE ABC TRANSPORTER PERMEASE PROTEIN YCJO"/>
    <property type="match status" value="1"/>
</dbReference>
<dbReference type="Pfam" id="PF00528">
    <property type="entry name" value="BPD_transp_1"/>
    <property type="match status" value="1"/>
</dbReference>
<dbReference type="SUPFAM" id="SSF161098">
    <property type="entry name" value="MetI-like"/>
    <property type="match status" value="1"/>
</dbReference>
<dbReference type="PROSITE" id="PS50928">
    <property type="entry name" value="ABC_TM1"/>
    <property type="match status" value="1"/>
</dbReference>
<evidence type="ECO:0000255" key="1">
    <source>
        <dbReference type="PROSITE-ProRule" id="PRU00441"/>
    </source>
</evidence>
<evidence type="ECO:0000305" key="2"/>
<sequence>MVNQNKIIPYLFLVPALVFLLFVYIPIFENVFLSLFQWSSFSPEKTFIGLKNYVELFHDPVFYQALTNNVLYAVISIVCQVFGGLILAAVLEDKLVRKWSPFFRTVFFLPVVISMTVIALLFDFIYNPETGLLNQLLQAIGLDQLTRAWLGDDSTAMLSVIFVSQWQSVGYIAMLYIVSIQKIPDELYEAARLDGAGKIQQFFHITVPQTKEMSFVAVVMTLTGAFTVFNEPYILTGGGPGKASEVLSTFLYKSAFTKDMMGYASAIATVVLIITLALSLMQMKFFKTGKEE</sequence>
<name>YURN_BACSU</name>
<reference key="1">
    <citation type="journal article" date="1997" name="Nature">
        <title>The complete genome sequence of the Gram-positive bacterium Bacillus subtilis.</title>
        <authorList>
            <person name="Kunst F."/>
            <person name="Ogasawara N."/>
            <person name="Moszer I."/>
            <person name="Albertini A.M."/>
            <person name="Alloni G."/>
            <person name="Azevedo V."/>
            <person name="Bertero M.G."/>
            <person name="Bessieres P."/>
            <person name="Bolotin A."/>
            <person name="Borchert S."/>
            <person name="Borriss R."/>
            <person name="Boursier L."/>
            <person name="Brans A."/>
            <person name="Braun M."/>
            <person name="Brignell S.C."/>
            <person name="Bron S."/>
            <person name="Brouillet S."/>
            <person name="Bruschi C.V."/>
            <person name="Caldwell B."/>
            <person name="Capuano V."/>
            <person name="Carter N.M."/>
            <person name="Choi S.-K."/>
            <person name="Codani J.-J."/>
            <person name="Connerton I.F."/>
            <person name="Cummings N.J."/>
            <person name="Daniel R.A."/>
            <person name="Denizot F."/>
            <person name="Devine K.M."/>
            <person name="Duesterhoeft A."/>
            <person name="Ehrlich S.D."/>
            <person name="Emmerson P.T."/>
            <person name="Entian K.-D."/>
            <person name="Errington J."/>
            <person name="Fabret C."/>
            <person name="Ferrari E."/>
            <person name="Foulger D."/>
            <person name="Fritz C."/>
            <person name="Fujita M."/>
            <person name="Fujita Y."/>
            <person name="Fuma S."/>
            <person name="Galizzi A."/>
            <person name="Galleron N."/>
            <person name="Ghim S.-Y."/>
            <person name="Glaser P."/>
            <person name="Goffeau A."/>
            <person name="Golightly E.J."/>
            <person name="Grandi G."/>
            <person name="Guiseppi G."/>
            <person name="Guy B.J."/>
            <person name="Haga K."/>
            <person name="Haiech J."/>
            <person name="Harwood C.R."/>
            <person name="Henaut A."/>
            <person name="Hilbert H."/>
            <person name="Holsappel S."/>
            <person name="Hosono S."/>
            <person name="Hullo M.-F."/>
            <person name="Itaya M."/>
            <person name="Jones L.-M."/>
            <person name="Joris B."/>
            <person name="Karamata D."/>
            <person name="Kasahara Y."/>
            <person name="Klaerr-Blanchard M."/>
            <person name="Klein C."/>
            <person name="Kobayashi Y."/>
            <person name="Koetter P."/>
            <person name="Koningstein G."/>
            <person name="Krogh S."/>
            <person name="Kumano M."/>
            <person name="Kurita K."/>
            <person name="Lapidus A."/>
            <person name="Lardinois S."/>
            <person name="Lauber J."/>
            <person name="Lazarevic V."/>
            <person name="Lee S.-M."/>
            <person name="Levine A."/>
            <person name="Liu H."/>
            <person name="Masuda S."/>
            <person name="Mauel C."/>
            <person name="Medigue C."/>
            <person name="Medina N."/>
            <person name="Mellado R.P."/>
            <person name="Mizuno M."/>
            <person name="Moestl D."/>
            <person name="Nakai S."/>
            <person name="Noback M."/>
            <person name="Noone D."/>
            <person name="O'Reilly M."/>
            <person name="Ogawa K."/>
            <person name="Ogiwara A."/>
            <person name="Oudega B."/>
            <person name="Park S.-H."/>
            <person name="Parro V."/>
            <person name="Pohl T.M."/>
            <person name="Portetelle D."/>
            <person name="Porwollik S."/>
            <person name="Prescott A.M."/>
            <person name="Presecan E."/>
            <person name="Pujic P."/>
            <person name="Purnelle B."/>
            <person name="Rapoport G."/>
            <person name="Rey M."/>
            <person name="Reynolds S."/>
            <person name="Rieger M."/>
            <person name="Rivolta C."/>
            <person name="Rocha E."/>
            <person name="Roche B."/>
            <person name="Rose M."/>
            <person name="Sadaie Y."/>
            <person name="Sato T."/>
            <person name="Scanlan E."/>
            <person name="Schleich S."/>
            <person name="Schroeter R."/>
            <person name="Scoffone F."/>
            <person name="Sekiguchi J."/>
            <person name="Sekowska A."/>
            <person name="Seror S.J."/>
            <person name="Serror P."/>
            <person name="Shin B.-S."/>
            <person name="Soldo B."/>
            <person name="Sorokin A."/>
            <person name="Tacconi E."/>
            <person name="Takagi T."/>
            <person name="Takahashi H."/>
            <person name="Takemaru K."/>
            <person name="Takeuchi M."/>
            <person name="Tamakoshi A."/>
            <person name="Tanaka T."/>
            <person name="Terpstra P."/>
            <person name="Tognoni A."/>
            <person name="Tosato V."/>
            <person name="Uchiyama S."/>
            <person name="Vandenbol M."/>
            <person name="Vannier F."/>
            <person name="Vassarotti A."/>
            <person name="Viari A."/>
            <person name="Wambutt R."/>
            <person name="Wedler E."/>
            <person name="Wedler H."/>
            <person name="Weitzenegger T."/>
            <person name="Winters P."/>
            <person name="Wipat A."/>
            <person name="Yamamoto H."/>
            <person name="Yamane K."/>
            <person name="Yasumoto K."/>
            <person name="Yata K."/>
            <person name="Yoshida K."/>
            <person name="Yoshikawa H.-F."/>
            <person name="Zumstein E."/>
            <person name="Yoshikawa H."/>
            <person name="Danchin A."/>
        </authorList>
    </citation>
    <scope>NUCLEOTIDE SEQUENCE [LARGE SCALE GENOMIC DNA]</scope>
    <source>
        <strain>168</strain>
    </source>
</reference>
<keyword id="KW-1003">Cell membrane</keyword>
<keyword id="KW-0472">Membrane</keyword>
<keyword id="KW-1185">Reference proteome</keyword>
<keyword id="KW-0812">Transmembrane</keyword>
<keyword id="KW-1133">Transmembrane helix</keyword>
<keyword id="KW-0813">Transport</keyword>